<name>NAS8_HORVU</name>
<reference key="1">
    <citation type="journal article" date="1999" name="Eur. J. Biochem.">
        <title>Isolation, characterization and cDNA cloning of nicotianamine synthase from barley. A key enzyme for iron homeostasis in plants.</title>
        <authorList>
            <person name="Herbik A."/>
            <person name="Koch G."/>
            <person name="Mock H.-P."/>
            <person name="Dushkov D."/>
            <person name="Czihal A."/>
            <person name="Thielmann J."/>
            <person name="Stephan U.W."/>
            <person name="Baeumlein H."/>
        </authorList>
    </citation>
    <scope>NUCLEOTIDE SEQUENCE [MRNA]</scope>
    <scope>PROTEIN SEQUENCE OF 111-118 AND 255-263</scope>
    <scope>FUNCTION</scope>
    <source>
        <strain>cv. Bonus</strain>
    </source>
</reference>
<proteinExistence type="evidence at protein level"/>
<keyword id="KW-0903">Direct protein sequencing</keyword>
<keyword id="KW-0949">S-adenosyl-L-methionine</keyword>
<keyword id="KW-0808">Transferase</keyword>
<feature type="chain" id="PRO_0000212711" description="Nicotianamine synthase 8">
    <location>
        <begin position="1"/>
        <end position="329"/>
    </location>
</feature>
<feature type="sequence conflict" description="In Ref. 1; AA sequence." evidence="2" ref="1">
    <original>R</original>
    <variation>A</variation>
    <location>
        <position position="118"/>
    </location>
</feature>
<feature type="sequence conflict" description="In Ref. 1; AA sequence." evidence="2" ref="1">
    <original>GG</original>
    <variation>LE</variation>
    <location>
        <begin position="255"/>
        <end position="256"/>
    </location>
</feature>
<accession>Q9XFB6</accession>
<sequence>MDAQNKEVDALVQKITGLHAAIAKLPSLSPSPDVDALFTDLVTACVPPSPVDVTKLGSEAQEMREGLIRLCSEAEGKLEAHYSDMLAAFDNPLDHLGMFPYYSNYINLSKLEYELLARYVPGRHRPARVAFIGSGPLPFSSYVLAARHLPDAMFDNYDLCSAANDRASKLFRADKDVGARMSFHTADVADLTGELAAYDVVFLAALVGMAAEDKTKVIAHLGAHMADGAALVVRSAHGHVGFLYPIVDPQDIGRGGFEVLAVCHPDDDVVNSVIIAHKSKDVHANERPNGVVDSTRGAVPVVSPPCRFGEMVADVTHKREEFTNAEVAF</sequence>
<protein>
    <recommendedName>
        <fullName>Nicotianamine synthase 8</fullName>
        <ecNumber>2.5.1.43</ecNumber>
    </recommendedName>
    <alternativeName>
        <fullName>S-adenosyl-L-methionine:S-adenosyl-L-methionine:S-adenosyl-methionine 3-amino-3-carboxypropyltransferase 8</fullName>
    </alternativeName>
</protein>
<evidence type="ECO:0000269" key="1">
    <source>
    </source>
</evidence>
<evidence type="ECO:0000305" key="2"/>
<organism>
    <name type="scientific">Hordeum vulgare</name>
    <name type="common">Barley</name>
    <dbReference type="NCBI Taxonomy" id="4513"/>
    <lineage>
        <taxon>Eukaryota</taxon>
        <taxon>Viridiplantae</taxon>
        <taxon>Streptophyta</taxon>
        <taxon>Embryophyta</taxon>
        <taxon>Tracheophyta</taxon>
        <taxon>Spermatophyta</taxon>
        <taxon>Magnoliopsida</taxon>
        <taxon>Liliopsida</taxon>
        <taxon>Poales</taxon>
        <taxon>Poaceae</taxon>
        <taxon>BOP clade</taxon>
        <taxon>Pooideae</taxon>
        <taxon>Triticodae</taxon>
        <taxon>Triticeae</taxon>
        <taxon>Hordeinae</taxon>
        <taxon>Hordeum</taxon>
    </lineage>
</organism>
<dbReference type="EC" id="2.5.1.43"/>
<dbReference type="EMBL" id="AF136941">
    <property type="protein sequence ID" value="AAD32650.1"/>
    <property type="molecule type" value="mRNA"/>
</dbReference>
<dbReference type="SMR" id="Q9XFB6"/>
<dbReference type="BRENDA" id="2.5.1.43">
    <property type="organism ID" value="2687"/>
</dbReference>
<dbReference type="ExpressionAtlas" id="Q9XFB6">
    <property type="expression patterns" value="baseline"/>
</dbReference>
<dbReference type="GO" id="GO:0030410">
    <property type="term" value="F:nicotianamine synthase activity"/>
    <property type="evidence" value="ECO:0007669"/>
    <property type="project" value="UniProtKB-EC"/>
</dbReference>
<dbReference type="GO" id="GO:0030418">
    <property type="term" value="P:nicotianamine biosynthetic process"/>
    <property type="evidence" value="ECO:0007669"/>
    <property type="project" value="InterPro"/>
</dbReference>
<dbReference type="Gene3D" id="3.40.50.150">
    <property type="entry name" value="Vaccinia Virus protein VP39"/>
    <property type="match status" value="1"/>
</dbReference>
<dbReference type="InterPro" id="IPR004298">
    <property type="entry name" value="Nicotian_synth"/>
</dbReference>
<dbReference type="InterPro" id="IPR029063">
    <property type="entry name" value="SAM-dependent_MTases_sf"/>
</dbReference>
<dbReference type="PANTHER" id="PTHR32266:SF23">
    <property type="entry name" value="NICOTIANAMINE SYNTHASE"/>
    <property type="match status" value="1"/>
</dbReference>
<dbReference type="PANTHER" id="PTHR32266">
    <property type="entry name" value="NICOTIANAMINE SYNTHASE 3"/>
    <property type="match status" value="1"/>
</dbReference>
<dbReference type="Pfam" id="PF03059">
    <property type="entry name" value="NAS"/>
    <property type="match status" value="1"/>
</dbReference>
<dbReference type="SUPFAM" id="SSF53335">
    <property type="entry name" value="S-adenosyl-L-methionine-dependent methyltransferases"/>
    <property type="match status" value="1"/>
</dbReference>
<dbReference type="PROSITE" id="PS51142">
    <property type="entry name" value="NAS"/>
    <property type="match status" value="1"/>
</dbReference>
<gene>
    <name type="primary">NAS8</name>
    <name type="synonym">NASHOR1</name>
</gene>
<comment type="function">
    <text evidence="1">Synthesizes nicotianamine, a polyamine that is the first intermediate in the synthesis of the phytosiderophores of the mugineic acid type found in gramineae which serve as a sensor for the physiological iron status within the plant, and/or might be involved in the transport of iron.</text>
</comment>
<comment type="catalytic activity">
    <reaction>
        <text>3 S-adenosyl-L-methionine = nicotianamine + 3 S-methyl-5'-thioadenosine + 3 H(+)</text>
        <dbReference type="Rhea" id="RHEA:16481"/>
        <dbReference type="ChEBI" id="CHEBI:15378"/>
        <dbReference type="ChEBI" id="CHEBI:17509"/>
        <dbReference type="ChEBI" id="CHEBI:58249"/>
        <dbReference type="ChEBI" id="CHEBI:59789"/>
        <dbReference type="EC" id="2.5.1.43"/>
    </reaction>
</comment>
<comment type="subunit">
    <text>Homotrimer.</text>
</comment>
<comment type="induction">
    <text>Fivefold increase after iron deficiency.</text>
</comment>
<comment type="similarity">
    <text evidence="2">Belongs to the nicotianamine synthase (NAS)-like family.</text>
</comment>